<name>SNMP2_HELVI</name>
<protein>
    <recommendedName>
        <fullName evidence="5 7">Sensory neuron membrane protein 2</fullName>
        <shortName evidence="5">HvirSNMP-2</shortName>
    </recommendedName>
</protein>
<reference evidence="6 7" key="1">
    <citation type="journal article" date="2008" name="Chem. Senses">
        <title>Differential expression of SNMP-1 and SNMP-2 proteins in pheromone-sensitive hairs of moths.</title>
        <authorList>
            <person name="Forstner M."/>
            <person name="Gohl T."/>
            <person name="Gondesen I."/>
            <person name="Raming K."/>
            <person name="Breer H."/>
            <person name="Krieger J."/>
        </authorList>
    </citation>
    <scope>NUCLEOTIDE SEQUENCE [MRNA]</scope>
    <scope>FUNCTION</scope>
    <scope>TISSUE SPECIFICITY</scope>
    <source>
        <tissue evidence="7">Antenna</tissue>
    </source>
</reference>
<gene>
    <name evidence="7" type="primary">snmp2</name>
</gene>
<evidence type="ECO:0000250" key="1">
    <source>
        <dbReference type="UniProtKB" id="O02351"/>
    </source>
</evidence>
<evidence type="ECO:0000250" key="2">
    <source>
        <dbReference type="UniProtKB" id="P26201"/>
    </source>
</evidence>
<evidence type="ECO:0000255" key="3"/>
<evidence type="ECO:0000269" key="4">
    <source>
    </source>
</evidence>
<evidence type="ECO:0000303" key="5">
    <source>
    </source>
</evidence>
<evidence type="ECO:0000305" key="6"/>
<evidence type="ECO:0000312" key="7">
    <source>
        <dbReference type="EMBL" id="CAP19028.1"/>
    </source>
</evidence>
<dbReference type="EMBL" id="AM905328">
    <property type="protein sequence ID" value="CAP19028.1"/>
    <property type="molecule type" value="mRNA"/>
</dbReference>
<dbReference type="SMR" id="B2RFN2"/>
<dbReference type="TCDB" id="9.B.39.1.12">
    <property type="family name" value="the long chain fatty acid translocase (lcfat) family"/>
</dbReference>
<dbReference type="GlyCosmos" id="B2RFN2">
    <property type="glycosylation" value="7 sites, No reported glycans"/>
</dbReference>
<dbReference type="GO" id="GO:0005737">
    <property type="term" value="C:cytoplasm"/>
    <property type="evidence" value="ECO:0007669"/>
    <property type="project" value="TreeGrafter"/>
</dbReference>
<dbReference type="GO" id="GO:0005886">
    <property type="term" value="C:plasma membrane"/>
    <property type="evidence" value="ECO:0007669"/>
    <property type="project" value="UniProtKB-SubCell"/>
</dbReference>
<dbReference type="GO" id="GO:0005044">
    <property type="term" value="F:scavenger receptor activity"/>
    <property type="evidence" value="ECO:0007669"/>
    <property type="project" value="TreeGrafter"/>
</dbReference>
<dbReference type="GO" id="GO:0007608">
    <property type="term" value="P:sensory perception of smell"/>
    <property type="evidence" value="ECO:0007669"/>
    <property type="project" value="UniProtKB-KW"/>
</dbReference>
<dbReference type="InterPro" id="IPR002159">
    <property type="entry name" value="CD36_fam"/>
</dbReference>
<dbReference type="PANTHER" id="PTHR11923">
    <property type="entry name" value="SCAVENGER RECEPTOR CLASS B TYPE-1 SR-B1"/>
    <property type="match status" value="1"/>
</dbReference>
<dbReference type="PANTHER" id="PTHR11923:SF109">
    <property type="entry name" value="SENSORY NEURON MEMBRANE PROTEIN 2"/>
    <property type="match status" value="1"/>
</dbReference>
<dbReference type="Pfam" id="PF01130">
    <property type="entry name" value="CD36"/>
    <property type="match status" value="1"/>
</dbReference>
<dbReference type="PRINTS" id="PR01609">
    <property type="entry name" value="CD36FAMILY"/>
</dbReference>
<organism>
    <name type="scientific">Heliothis virescens</name>
    <name type="common">Tobacco budworm moth</name>
    <dbReference type="NCBI Taxonomy" id="7102"/>
    <lineage>
        <taxon>Eukaryota</taxon>
        <taxon>Metazoa</taxon>
        <taxon>Ecdysozoa</taxon>
        <taxon>Arthropoda</taxon>
        <taxon>Hexapoda</taxon>
        <taxon>Insecta</taxon>
        <taxon>Pterygota</taxon>
        <taxon>Neoptera</taxon>
        <taxon>Endopterygota</taxon>
        <taxon>Lepidoptera</taxon>
        <taxon>Glossata</taxon>
        <taxon>Ditrysia</taxon>
        <taxon>Noctuoidea</taxon>
        <taxon>Noctuidae</taxon>
        <taxon>Heliothinae</taxon>
        <taxon>Heliothis</taxon>
    </lineage>
</organism>
<accession>B2RFN2</accession>
<proteinExistence type="evidence at transcript level"/>
<keyword id="KW-1003">Cell membrane</keyword>
<keyword id="KW-1015">Disulfide bond</keyword>
<keyword id="KW-0325">Glycoprotein</keyword>
<keyword id="KW-0472">Membrane</keyword>
<keyword id="KW-0552">Olfaction</keyword>
<keyword id="KW-0675">Receptor</keyword>
<keyword id="KW-0716">Sensory transduction</keyword>
<keyword id="KW-0812">Transmembrane</keyword>
<keyword id="KW-1133">Transmembrane helix</keyword>
<comment type="function">
    <text evidence="1 4">Plays an olfactory role that is not restricted to pheromone sensitivity (By similarity). May play a role in the elimination of lipophilic components from the sensillum lymph.</text>
</comment>
<comment type="subcellular location">
    <subcellularLocation>
        <location evidence="1">Cell membrane</location>
        <topology evidence="1">Multi-pass membrane protein</topology>
    </subcellularLocation>
</comment>
<comment type="tissue specificity">
    <text evidence="4">Localizes to cells surrounding the sensory neurons in the antenna. Associate in a ratio of 2:1 with the neurons expressing the other subtype SNMP1.</text>
</comment>
<comment type="similarity">
    <text evidence="3">Belongs to the CD36 family.</text>
</comment>
<feature type="chain" id="PRO_0000413630" description="Sensory neuron membrane protein 2">
    <location>
        <begin position="1"/>
        <end position="520"/>
    </location>
</feature>
<feature type="topological domain" description="Cytoplasmic" evidence="3">
    <location>
        <begin position="1"/>
        <end position="7"/>
    </location>
</feature>
<feature type="transmembrane region" description="Helical" evidence="3">
    <location>
        <begin position="8"/>
        <end position="28"/>
    </location>
</feature>
<feature type="topological domain" description="Extracellular" evidence="3">
    <location>
        <begin position="29"/>
        <end position="468"/>
    </location>
</feature>
<feature type="transmembrane region" description="Helical" evidence="3">
    <location>
        <begin position="469"/>
        <end position="489"/>
    </location>
</feature>
<feature type="topological domain" description="Cytoplasmic" evidence="3">
    <location>
        <begin position="490"/>
        <end position="520"/>
    </location>
</feature>
<feature type="glycosylation site" description="N-linked (GlcNAc...) asparagine" evidence="3">
    <location>
        <position position="44"/>
    </location>
</feature>
<feature type="glycosylation site" description="N-linked (GlcNAc...) asparagine" evidence="3">
    <location>
        <position position="67"/>
    </location>
</feature>
<feature type="glycosylation site" description="N-linked (GlcNAc...) asparagine" evidence="3">
    <location>
        <position position="104"/>
    </location>
</feature>
<feature type="glycosylation site" description="N-linked (GlcNAc...) asparagine" evidence="3">
    <location>
        <position position="228"/>
    </location>
</feature>
<feature type="glycosylation site" description="N-linked (GlcNAc...) asparagine" evidence="3">
    <location>
        <position position="271"/>
    </location>
</feature>
<feature type="glycosylation site" description="N-linked (GlcNAc...) asparagine" evidence="3">
    <location>
        <position position="313"/>
    </location>
</feature>
<feature type="glycosylation site" description="N-linked (GlcNAc...) asparagine" evidence="3">
    <location>
        <position position="342"/>
    </location>
</feature>
<feature type="disulfide bond" evidence="2">
    <location>
        <begin position="267"/>
        <end position="337"/>
    </location>
</feature>
<feature type="disulfide bond" evidence="2">
    <location>
        <begin position="298"/>
        <end position="361"/>
    </location>
</feature>
<feature type="disulfide bond" evidence="2">
    <location>
        <begin position="339"/>
        <end position="350"/>
    </location>
</feature>
<sequence length="520" mass="58629">MLGKHSKIFFGVSLIFLVIAIVLASWGFQKIVNKQIQKNVQLANDSKMFERWVKLPMPLDFKVYVFNVTNVEEVNQGGKPILQEIGPYVYKQYREKTILGYGDNDTIKYMLKKHFEFDPEASGSLTEDDELTVVHFSYLAALLTVHDMMPSLVTVVNKALEQLFPSLEDAFLRVKVRDLFFDGIYLSCDGDNSALGLVCGKIRAEMPPTMRKAEGSNGFYFSMFSHMNRSESGPYEMIRGRDNVYELGNIVSYKGQENMPMWGDKYCGQINGSDSSIFPPIKEDDVPKKIYTFEPDICRSVYADLVDKRELFNISTYYYEISETAFAAKSANPNNRCFCKKNWSANHDGCLLMGLLNLTPCQGAPAIASLPHFYLGSEELLDYFQSGVQPDKEKHNTYVYIDPVTGVVLSGVKRLQFNIEMRQINNIPQLKSVPTGLFPMLWLEEGATIPESIQQELRDSHKLLGYVEVAKWFLLTIAIISVIASAVAVARANALLSWPRNSNSVSFILGPSVTQVNKGN</sequence>